<comment type="function">
    <text evidence="1">Oxidative deamination of D-amino acids.</text>
</comment>
<comment type="catalytic activity">
    <reaction evidence="1">
        <text>a D-alpha-amino acid + A + H2O = a 2-oxocarboxylate + AH2 + NH4(+)</text>
        <dbReference type="Rhea" id="RHEA:18125"/>
        <dbReference type="ChEBI" id="CHEBI:13193"/>
        <dbReference type="ChEBI" id="CHEBI:15377"/>
        <dbReference type="ChEBI" id="CHEBI:17499"/>
        <dbReference type="ChEBI" id="CHEBI:28938"/>
        <dbReference type="ChEBI" id="CHEBI:35179"/>
        <dbReference type="ChEBI" id="CHEBI:59871"/>
    </reaction>
</comment>
<comment type="cofactor">
    <cofactor evidence="1">
        <name>FAD</name>
        <dbReference type="ChEBI" id="CHEBI:57692"/>
    </cofactor>
</comment>
<comment type="pathway">
    <text>Amino-acid degradation; D-alanine degradation; NH(3) and pyruvate from D-alanine: step 1/1.</text>
</comment>
<comment type="similarity">
    <text evidence="1">Belongs to the DadA oxidoreductase family.</text>
</comment>
<sequence length="432" mass="47633">MRVVILGSGVVGVASAWYLNQAGHEVTVIDREPGAALETSAANAGQISPGYAAPWAAPGVPLKAIKWMFQRHAPLAVRLDGTQFQLKWMWQMLRNCDTSHYMENKGRMVRLAEYSRDCLKALRAETNIQYEGRQGGTLQLFRTEQQYENATRDIAVLEDAGVPYQLLESSRLAEVEPALAEVAHKLTGGLQLPNDETGDCQLFTQNLARMAEQAGVKFRFNTPVDQLLCDGEQIYGVKCGDEVIKADAYVMAFGSYSTAMLKGIVDIPVYPLKGYSLTIPIAQEDGAPVSTILDETYKIAITRFDNRIRVGGMAEIVGFNTELLQPRRETLEMVVRDLYPRGGHVEQATFWTGLRPMTPDGTPVVGRTRFKNLWLNTGHGTLGWTMACGSGQLLSDLLSGRTPAIPYEDLSVARYSRGFTPLRPGHLHGAHS</sequence>
<protein>
    <recommendedName>
        <fullName evidence="1">D-amino acid dehydrogenase</fullName>
        <ecNumber evidence="1">1.4.99.-</ecNumber>
    </recommendedName>
</protein>
<evidence type="ECO:0000255" key="1">
    <source>
        <dbReference type="HAMAP-Rule" id="MF_01202"/>
    </source>
</evidence>
<organism>
    <name type="scientific">Escherichia coli O45:K1 (strain S88 / ExPEC)</name>
    <dbReference type="NCBI Taxonomy" id="585035"/>
    <lineage>
        <taxon>Bacteria</taxon>
        <taxon>Pseudomonadati</taxon>
        <taxon>Pseudomonadota</taxon>
        <taxon>Gammaproteobacteria</taxon>
        <taxon>Enterobacterales</taxon>
        <taxon>Enterobacteriaceae</taxon>
        <taxon>Escherichia</taxon>
    </lineage>
</organism>
<gene>
    <name evidence="1" type="primary">dadA</name>
    <name type="ordered locus">ECS88_1252</name>
</gene>
<name>DADA_ECO45</name>
<keyword id="KW-0274">FAD</keyword>
<keyword id="KW-0285">Flavoprotein</keyword>
<keyword id="KW-0560">Oxidoreductase</keyword>
<keyword id="KW-1185">Reference proteome</keyword>
<feature type="chain" id="PRO_1000138648" description="D-amino acid dehydrogenase">
    <location>
        <begin position="1"/>
        <end position="432"/>
    </location>
</feature>
<feature type="binding site" evidence="1">
    <location>
        <begin position="3"/>
        <end position="17"/>
    </location>
    <ligand>
        <name>FAD</name>
        <dbReference type="ChEBI" id="CHEBI:57692"/>
    </ligand>
</feature>
<proteinExistence type="inferred from homology"/>
<dbReference type="EC" id="1.4.99.-" evidence="1"/>
<dbReference type="EMBL" id="CU928161">
    <property type="protein sequence ID" value="CAR02578.1"/>
    <property type="molecule type" value="Genomic_DNA"/>
</dbReference>
<dbReference type="RefSeq" id="WP_001266907.1">
    <property type="nucleotide sequence ID" value="NC_011742.1"/>
</dbReference>
<dbReference type="SMR" id="B7MK86"/>
<dbReference type="KEGG" id="ecz:ECS88_1252"/>
<dbReference type="HOGENOM" id="CLU_007884_9_2_6"/>
<dbReference type="UniPathway" id="UPA00043">
    <property type="reaction ID" value="UER00498"/>
</dbReference>
<dbReference type="Proteomes" id="UP000000747">
    <property type="component" value="Chromosome"/>
</dbReference>
<dbReference type="GO" id="GO:0005737">
    <property type="term" value="C:cytoplasm"/>
    <property type="evidence" value="ECO:0007669"/>
    <property type="project" value="TreeGrafter"/>
</dbReference>
<dbReference type="GO" id="GO:0005886">
    <property type="term" value="C:plasma membrane"/>
    <property type="evidence" value="ECO:0007669"/>
    <property type="project" value="TreeGrafter"/>
</dbReference>
<dbReference type="GO" id="GO:0008718">
    <property type="term" value="F:D-amino-acid dehydrogenase activity"/>
    <property type="evidence" value="ECO:0007669"/>
    <property type="project" value="UniProtKB-UniRule"/>
</dbReference>
<dbReference type="GO" id="GO:0055130">
    <property type="term" value="P:D-alanine catabolic process"/>
    <property type="evidence" value="ECO:0007669"/>
    <property type="project" value="UniProtKB-UniPathway"/>
</dbReference>
<dbReference type="FunFam" id="3.50.50.60:FF:000020">
    <property type="entry name" value="D-amino acid dehydrogenase"/>
    <property type="match status" value="1"/>
</dbReference>
<dbReference type="Gene3D" id="3.30.9.10">
    <property type="entry name" value="D-Amino Acid Oxidase, subunit A, domain 2"/>
    <property type="match status" value="1"/>
</dbReference>
<dbReference type="Gene3D" id="3.50.50.60">
    <property type="entry name" value="FAD/NAD(P)-binding domain"/>
    <property type="match status" value="2"/>
</dbReference>
<dbReference type="HAMAP" id="MF_01202">
    <property type="entry name" value="DadA"/>
    <property type="match status" value="1"/>
</dbReference>
<dbReference type="InterPro" id="IPR023080">
    <property type="entry name" value="DadA"/>
</dbReference>
<dbReference type="InterPro" id="IPR006076">
    <property type="entry name" value="FAD-dep_OxRdtase"/>
</dbReference>
<dbReference type="InterPro" id="IPR036188">
    <property type="entry name" value="FAD/NAD-bd_sf"/>
</dbReference>
<dbReference type="NCBIfam" id="NF001933">
    <property type="entry name" value="PRK00711.1"/>
    <property type="match status" value="1"/>
</dbReference>
<dbReference type="PANTHER" id="PTHR13847:SF280">
    <property type="entry name" value="D-AMINO ACID DEHYDROGENASE"/>
    <property type="match status" value="1"/>
</dbReference>
<dbReference type="PANTHER" id="PTHR13847">
    <property type="entry name" value="SARCOSINE DEHYDROGENASE-RELATED"/>
    <property type="match status" value="1"/>
</dbReference>
<dbReference type="Pfam" id="PF01266">
    <property type="entry name" value="DAO"/>
    <property type="match status" value="1"/>
</dbReference>
<dbReference type="SUPFAM" id="SSF54373">
    <property type="entry name" value="FAD-linked reductases, C-terminal domain"/>
    <property type="match status" value="1"/>
</dbReference>
<dbReference type="SUPFAM" id="SSF51905">
    <property type="entry name" value="FAD/NAD(P)-binding domain"/>
    <property type="match status" value="1"/>
</dbReference>
<reference key="1">
    <citation type="journal article" date="2009" name="PLoS Genet.">
        <title>Organised genome dynamics in the Escherichia coli species results in highly diverse adaptive paths.</title>
        <authorList>
            <person name="Touchon M."/>
            <person name="Hoede C."/>
            <person name="Tenaillon O."/>
            <person name="Barbe V."/>
            <person name="Baeriswyl S."/>
            <person name="Bidet P."/>
            <person name="Bingen E."/>
            <person name="Bonacorsi S."/>
            <person name="Bouchier C."/>
            <person name="Bouvet O."/>
            <person name="Calteau A."/>
            <person name="Chiapello H."/>
            <person name="Clermont O."/>
            <person name="Cruveiller S."/>
            <person name="Danchin A."/>
            <person name="Diard M."/>
            <person name="Dossat C."/>
            <person name="Karoui M.E."/>
            <person name="Frapy E."/>
            <person name="Garry L."/>
            <person name="Ghigo J.M."/>
            <person name="Gilles A.M."/>
            <person name="Johnson J."/>
            <person name="Le Bouguenec C."/>
            <person name="Lescat M."/>
            <person name="Mangenot S."/>
            <person name="Martinez-Jehanne V."/>
            <person name="Matic I."/>
            <person name="Nassif X."/>
            <person name="Oztas S."/>
            <person name="Petit M.A."/>
            <person name="Pichon C."/>
            <person name="Rouy Z."/>
            <person name="Ruf C.S."/>
            <person name="Schneider D."/>
            <person name="Tourret J."/>
            <person name="Vacherie B."/>
            <person name="Vallenet D."/>
            <person name="Medigue C."/>
            <person name="Rocha E.P.C."/>
            <person name="Denamur E."/>
        </authorList>
    </citation>
    <scope>NUCLEOTIDE SEQUENCE [LARGE SCALE GENOMIC DNA]</scope>
    <source>
        <strain>S88 / ExPEC</strain>
    </source>
</reference>
<accession>B7MK86</accession>